<feature type="chain" id="PRO_1000097195" description="4-hydroxy-3-methylbut-2-en-1-yl diphosphate synthase (flavodoxin)">
    <location>
        <begin position="1"/>
        <end position="426"/>
    </location>
</feature>
<feature type="region of interest" description="Disordered" evidence="2">
    <location>
        <begin position="1"/>
        <end position="20"/>
    </location>
</feature>
<feature type="binding site" evidence="1">
    <location>
        <position position="320"/>
    </location>
    <ligand>
        <name>[4Fe-4S] cluster</name>
        <dbReference type="ChEBI" id="CHEBI:49883"/>
    </ligand>
</feature>
<feature type="binding site" evidence="1">
    <location>
        <position position="323"/>
    </location>
    <ligand>
        <name>[4Fe-4S] cluster</name>
        <dbReference type="ChEBI" id="CHEBI:49883"/>
    </ligand>
</feature>
<feature type="binding site" evidence="1">
    <location>
        <position position="366"/>
    </location>
    <ligand>
        <name>[4Fe-4S] cluster</name>
        <dbReference type="ChEBI" id="CHEBI:49883"/>
    </ligand>
</feature>
<feature type="binding site" evidence="1">
    <location>
        <position position="373"/>
    </location>
    <ligand>
        <name>[4Fe-4S] cluster</name>
        <dbReference type="ChEBI" id="CHEBI:49883"/>
    </ligand>
</feature>
<organism>
    <name type="scientific">Wolbachia pipientis subsp. Culex pipiens (strain wPip)</name>
    <dbReference type="NCBI Taxonomy" id="570417"/>
    <lineage>
        <taxon>Bacteria</taxon>
        <taxon>Pseudomonadati</taxon>
        <taxon>Pseudomonadota</taxon>
        <taxon>Alphaproteobacteria</taxon>
        <taxon>Rickettsiales</taxon>
        <taxon>Anaplasmataceae</taxon>
        <taxon>Wolbachieae</taxon>
        <taxon>Wolbachia</taxon>
    </lineage>
</organism>
<proteinExistence type="inferred from homology"/>
<keyword id="KW-0004">4Fe-4S</keyword>
<keyword id="KW-0408">Iron</keyword>
<keyword id="KW-0411">Iron-sulfur</keyword>
<keyword id="KW-0414">Isoprene biosynthesis</keyword>
<keyword id="KW-0479">Metal-binding</keyword>
<keyword id="KW-0560">Oxidoreductase</keyword>
<gene>
    <name evidence="1" type="primary">ispG</name>
    <name type="ordered locus">WP0196</name>
</gene>
<reference key="1">
    <citation type="journal article" date="2008" name="Mol. Biol. Evol.">
        <title>Genome evolution of Wolbachia strain wPip from the Culex pipiens group.</title>
        <authorList>
            <person name="Klasson L."/>
            <person name="Walker T."/>
            <person name="Sebaihia M."/>
            <person name="Sanders M.J."/>
            <person name="Quail M.A."/>
            <person name="Lord A."/>
            <person name="Sanders S."/>
            <person name="Earl J."/>
            <person name="O'Neill S.L."/>
            <person name="Thomson N."/>
            <person name="Sinkins S.P."/>
            <person name="Parkhill J."/>
        </authorList>
    </citation>
    <scope>NUCLEOTIDE SEQUENCE [LARGE SCALE GENOMIC DNA]</scope>
    <source>
        <strain>wPip</strain>
    </source>
</reference>
<evidence type="ECO:0000255" key="1">
    <source>
        <dbReference type="HAMAP-Rule" id="MF_00159"/>
    </source>
</evidence>
<evidence type="ECO:0000256" key="2">
    <source>
        <dbReference type="SAM" id="MobiDB-lite"/>
    </source>
</evidence>
<comment type="function">
    <text evidence="1">Converts 2C-methyl-D-erythritol 2,4-cyclodiphosphate (ME-2,4cPP) into 1-hydroxy-2-methyl-2-(E)-butenyl 4-diphosphate.</text>
</comment>
<comment type="catalytic activity">
    <reaction evidence="1">
        <text>(2E)-4-hydroxy-3-methylbut-2-enyl diphosphate + oxidized [flavodoxin] + H2O + 2 H(+) = 2-C-methyl-D-erythritol 2,4-cyclic diphosphate + reduced [flavodoxin]</text>
        <dbReference type="Rhea" id="RHEA:43604"/>
        <dbReference type="Rhea" id="RHEA-COMP:10622"/>
        <dbReference type="Rhea" id="RHEA-COMP:10623"/>
        <dbReference type="ChEBI" id="CHEBI:15377"/>
        <dbReference type="ChEBI" id="CHEBI:15378"/>
        <dbReference type="ChEBI" id="CHEBI:57618"/>
        <dbReference type="ChEBI" id="CHEBI:58210"/>
        <dbReference type="ChEBI" id="CHEBI:58483"/>
        <dbReference type="ChEBI" id="CHEBI:128753"/>
        <dbReference type="EC" id="1.17.7.3"/>
    </reaction>
</comment>
<comment type="cofactor">
    <cofactor evidence="1">
        <name>[4Fe-4S] cluster</name>
        <dbReference type="ChEBI" id="CHEBI:49883"/>
    </cofactor>
    <text evidence="1">Binds 1 [4Fe-4S] cluster.</text>
</comment>
<comment type="pathway">
    <text evidence="1">Isoprenoid biosynthesis; isopentenyl diphosphate biosynthesis via DXP pathway; isopentenyl diphosphate from 1-deoxy-D-xylulose 5-phosphate: step 5/6.</text>
</comment>
<comment type="similarity">
    <text evidence="1">Belongs to the IspG family.</text>
</comment>
<sequence length="426" mass="46868">MLDRDLTLSDDAYESSPVSRHKTHTVKVGQVKIGGNNPIVVQSMALGAHIDSDNIKSSAQKYAKEVIELAHAGSELVRIALNSEEVAKAIPYIVEEINKEGFDGKILVGCGQYELYRLIQDYPDNIKILGKIRINPGNIGFGDKRDEKFEKIIEYAITHDLPVRIGVNWGSLDKYLSQKLMDENSLSSNPKTSDVILRKTLVMSALGSAKKAEKIGLNAEKIIISCKVSRVQDLILVYTALAKSSNYALHLGLTEAGMGNKGVVNTTAGLTYLLQNGIGDTIRASLTQRPGESRTNEVVVCQEILQSIGLCYFNPQVSSCPGCGRTSSDRFRILTEEVNGYIKTHMPVWKKKNPGVEYMKVAVMGCIVNGPGESKHANLGISLPGYGEKPVSAVYKDGKYFKTLQGDNIFEEFKEIISDYVEKHYT</sequence>
<accession>B3CNN4</accession>
<name>ISPG_WOLPP</name>
<protein>
    <recommendedName>
        <fullName evidence="1">4-hydroxy-3-methylbut-2-en-1-yl diphosphate synthase (flavodoxin)</fullName>
        <ecNumber evidence="1">1.17.7.3</ecNumber>
    </recommendedName>
    <alternativeName>
        <fullName evidence="1">1-hydroxy-2-methyl-2-(E)-butenyl 4-diphosphate synthase</fullName>
    </alternativeName>
</protein>
<dbReference type="EC" id="1.17.7.3" evidence="1"/>
<dbReference type="EMBL" id="AM999887">
    <property type="protein sequence ID" value="CAQ54304.1"/>
    <property type="molecule type" value="Genomic_DNA"/>
</dbReference>
<dbReference type="RefSeq" id="WP_007302669.1">
    <property type="nucleotide sequence ID" value="NC_010981.1"/>
</dbReference>
<dbReference type="SMR" id="B3CNN4"/>
<dbReference type="KEGG" id="wpi:WP0196"/>
<dbReference type="eggNOG" id="COG0821">
    <property type="taxonomic scope" value="Bacteria"/>
</dbReference>
<dbReference type="HOGENOM" id="CLU_042258_1_0_5"/>
<dbReference type="UniPathway" id="UPA00056">
    <property type="reaction ID" value="UER00096"/>
</dbReference>
<dbReference type="Proteomes" id="UP000008814">
    <property type="component" value="Chromosome"/>
</dbReference>
<dbReference type="GO" id="GO:0051539">
    <property type="term" value="F:4 iron, 4 sulfur cluster binding"/>
    <property type="evidence" value="ECO:0007669"/>
    <property type="project" value="UniProtKB-UniRule"/>
</dbReference>
<dbReference type="GO" id="GO:0046429">
    <property type="term" value="F:4-hydroxy-3-methylbut-2-en-1-yl diphosphate synthase activity (ferredoxin)"/>
    <property type="evidence" value="ECO:0007669"/>
    <property type="project" value="UniProtKB-UniRule"/>
</dbReference>
<dbReference type="GO" id="GO:0141197">
    <property type="term" value="F:4-hydroxy-3-methylbut-2-enyl-diphosphate synthase activity (flavodoxin)"/>
    <property type="evidence" value="ECO:0007669"/>
    <property type="project" value="UniProtKB-EC"/>
</dbReference>
<dbReference type="GO" id="GO:0005506">
    <property type="term" value="F:iron ion binding"/>
    <property type="evidence" value="ECO:0007669"/>
    <property type="project" value="InterPro"/>
</dbReference>
<dbReference type="GO" id="GO:0019288">
    <property type="term" value="P:isopentenyl diphosphate biosynthetic process, methylerythritol 4-phosphate pathway"/>
    <property type="evidence" value="ECO:0007669"/>
    <property type="project" value="UniProtKB-UniRule"/>
</dbReference>
<dbReference type="GO" id="GO:0016114">
    <property type="term" value="P:terpenoid biosynthetic process"/>
    <property type="evidence" value="ECO:0007669"/>
    <property type="project" value="InterPro"/>
</dbReference>
<dbReference type="FunFam" id="3.30.413.10:FF:000012">
    <property type="entry name" value="4-hydroxy-3-methylbut-2-en-1-yl diphosphate synthase (flavodoxin)"/>
    <property type="match status" value="1"/>
</dbReference>
<dbReference type="Gene3D" id="3.20.20.20">
    <property type="entry name" value="Dihydropteroate synthase-like"/>
    <property type="match status" value="1"/>
</dbReference>
<dbReference type="Gene3D" id="3.30.413.10">
    <property type="entry name" value="Sulfite Reductase Hemoprotein, domain 1"/>
    <property type="match status" value="1"/>
</dbReference>
<dbReference type="HAMAP" id="MF_00159">
    <property type="entry name" value="IspG"/>
    <property type="match status" value="1"/>
</dbReference>
<dbReference type="InterPro" id="IPR011005">
    <property type="entry name" value="Dihydropteroate_synth-like_sf"/>
</dbReference>
<dbReference type="InterPro" id="IPR016425">
    <property type="entry name" value="IspG_bac"/>
</dbReference>
<dbReference type="InterPro" id="IPR004588">
    <property type="entry name" value="IspG_bac-typ"/>
</dbReference>
<dbReference type="InterPro" id="IPR045854">
    <property type="entry name" value="NO2/SO3_Rdtase_4Fe4S_sf"/>
</dbReference>
<dbReference type="NCBIfam" id="TIGR00612">
    <property type="entry name" value="ispG_gcpE"/>
    <property type="match status" value="1"/>
</dbReference>
<dbReference type="NCBIfam" id="NF001540">
    <property type="entry name" value="PRK00366.1"/>
    <property type="match status" value="1"/>
</dbReference>
<dbReference type="PANTHER" id="PTHR30454">
    <property type="entry name" value="4-HYDROXY-3-METHYLBUT-2-EN-1-YL DIPHOSPHATE SYNTHASE"/>
    <property type="match status" value="1"/>
</dbReference>
<dbReference type="PANTHER" id="PTHR30454:SF0">
    <property type="entry name" value="4-HYDROXY-3-METHYLBUT-2-EN-1-YL DIPHOSPHATE SYNTHASE (FERREDOXIN), CHLOROPLASTIC"/>
    <property type="match status" value="1"/>
</dbReference>
<dbReference type="Pfam" id="PF04551">
    <property type="entry name" value="GcpE"/>
    <property type="match status" value="1"/>
</dbReference>
<dbReference type="PIRSF" id="PIRSF004640">
    <property type="entry name" value="IspG"/>
    <property type="match status" value="1"/>
</dbReference>